<feature type="chain" id="PRO_0000064428" description="Actin-binding protein">
    <location>
        <begin position="1"/>
        <end position="617"/>
    </location>
</feature>
<feature type="domain" description="ADF-H" evidence="3">
    <location>
        <begin position="7"/>
        <end position="136"/>
    </location>
</feature>
<feature type="repeat" description="1-1">
    <location>
        <begin position="202"/>
        <end position="211"/>
    </location>
</feature>
<feature type="repeat" description="1-2">
    <location>
        <begin position="444"/>
        <end position="453"/>
    </location>
</feature>
<feature type="repeat" description="2-1">
    <location>
        <begin position="495"/>
        <end position="510"/>
    </location>
</feature>
<feature type="repeat" description="2-2">
    <location>
        <begin position="523"/>
        <end position="538"/>
    </location>
</feature>
<feature type="domain" description="SH3" evidence="2">
    <location>
        <begin position="557"/>
        <end position="617"/>
    </location>
</feature>
<feature type="repeat" description="1-3">
    <location>
        <begin position="591"/>
        <end position="600"/>
    </location>
</feature>
<feature type="region of interest" description="Disordered" evidence="4">
    <location>
        <begin position="169"/>
        <end position="223"/>
    </location>
</feature>
<feature type="region of interest" description="3 X 10 AA approximate repeats">
    <location>
        <begin position="202"/>
        <end position="600"/>
    </location>
</feature>
<feature type="region of interest" description="Disordered" evidence="4">
    <location>
        <begin position="325"/>
        <end position="574"/>
    </location>
</feature>
<feature type="region of interest" description="2 X 16 AA repeats of E(7)-A-P-A-P-S-L-P-S-R">
    <location>
        <begin position="495"/>
        <end position="538"/>
    </location>
</feature>
<feature type="compositionally biased region" description="Basic and acidic residues" evidence="4">
    <location>
        <begin position="340"/>
        <end position="351"/>
    </location>
</feature>
<feature type="compositionally biased region" description="Basic and acidic residues" evidence="4">
    <location>
        <begin position="359"/>
        <end position="375"/>
    </location>
</feature>
<feature type="compositionally biased region" description="Polar residues" evidence="4">
    <location>
        <begin position="400"/>
        <end position="411"/>
    </location>
</feature>
<feature type="compositionally biased region" description="Acidic residues" evidence="4">
    <location>
        <begin position="437"/>
        <end position="453"/>
    </location>
</feature>
<feature type="compositionally biased region" description="Acidic residues" evidence="4">
    <location>
        <begin position="483"/>
        <end position="502"/>
    </location>
</feature>
<feature type="compositionally biased region" description="Acidic residues" evidence="4">
    <location>
        <begin position="516"/>
        <end position="530"/>
    </location>
</feature>
<sequence length="617" mass="68420">MALEPIDATTHSRDIEQEYQKVVRGTDNDTTWLIISPNTQKEYLPSSTGSSFSDFLQSFDETKVEYGIARVSPPGSDVGKIILVGWCPDSAPMKTRASFAANFGTIANSVLPGYHIQVTARDEDDLDEEELLTKISNAAGARYSIQAAGNSVPTSSASGSAPVKKVFTPSLAKKESEPKKSFVPPPVREEPVPVNVVKDNDADDWDEPEIKERNFETNPLSDNKPAYEPIGKIDLKKVIAEETAKEDPRLINRIDPSADIAHLKQESKIHRDNDLDNLLKQEKTSSPAVGGTKPPLVNLIFVEMIIVIRLYKVSRPEKSPAQLWAEKKMKQNQQSDSAQEEQKPVETKTEIEIGVDNSDEMKIGDLKSRFEKLGAETETEPEPPVQWETDSIPTVVKPQTFGQPAANSKPATQEVKKPFTPSNIGQRLPGMHTETPEHEEEDNDDDWGEDEDEPPKRNIPPPVMPARESAPQQPLPPRNTEPEPVEEGEEEEEEEEEEEEEAPAPSLPSRNAAPEPEPEQPQEEEEEEEAPAPSLPSRGSVPPPPPQRAVEPEEPAAEAPWATAEYDYEAGEDNELTFAENDKIINIEFVDDDWWLGELETTGQKGLFPSNYVVLGN</sequence>
<gene>
    <name type="primary">ABP1</name>
</gene>
<protein>
    <recommendedName>
        <fullName>Actin-binding protein</fullName>
    </recommendedName>
</protein>
<accession>P38479</accession>
<evidence type="ECO:0000250" key="1"/>
<evidence type="ECO:0000255" key="2">
    <source>
        <dbReference type="PROSITE-ProRule" id="PRU00192"/>
    </source>
</evidence>
<evidence type="ECO:0000255" key="3">
    <source>
        <dbReference type="PROSITE-ProRule" id="PRU00599"/>
    </source>
</evidence>
<evidence type="ECO:0000256" key="4">
    <source>
        <dbReference type="SAM" id="MobiDB-lite"/>
    </source>
</evidence>
<keyword id="KW-0009">Actin-binding</keyword>
<keyword id="KW-0963">Cytoplasm</keyword>
<keyword id="KW-0206">Cytoskeleton</keyword>
<keyword id="KW-0677">Repeat</keyword>
<keyword id="KW-0728">SH3 domain</keyword>
<reference key="1">
    <citation type="journal article" date="1994" name="Biochim. Biophys. Acta">
        <title>Cloning and sequencing of a gene coding for an actin binding protein of Saccharomyces exiguus.</title>
        <authorList>
            <person name="Lange U."/>
            <person name="Steiner S."/>
            <person name="Grolig F."/>
            <person name="Wagner G."/>
            <person name="Philippsen P."/>
        </authorList>
    </citation>
    <scope>NUCLEOTIDE SEQUENCE [GENOMIC DNA]</scope>
    <source>
        <strain>ATCC 10599 / BCRC 21524 / CBS 379 / DBVPG 6252 / JCM 1790 / NBRC 1128</strain>
    </source>
</reference>
<organism>
    <name type="scientific">Maudiozyma exigua</name>
    <name type="common">Yeast</name>
    <name type="synonym">Kazachstania exigua</name>
    <dbReference type="NCBI Taxonomy" id="34358"/>
    <lineage>
        <taxon>Eukaryota</taxon>
        <taxon>Fungi</taxon>
        <taxon>Dikarya</taxon>
        <taxon>Ascomycota</taxon>
        <taxon>Saccharomycotina</taxon>
        <taxon>Saccharomycetes</taxon>
        <taxon>Saccharomycetales</taxon>
        <taxon>Saccharomycetaceae</taxon>
        <taxon>Maudiozyma</taxon>
    </lineage>
</organism>
<name>ABP1_MAUEX</name>
<dbReference type="EMBL" id="X73977">
    <property type="protein sequence ID" value="CAA52156.1"/>
    <property type="molecule type" value="Genomic_DNA"/>
</dbReference>
<dbReference type="PIR" id="S42719">
    <property type="entry name" value="S42719"/>
</dbReference>
<dbReference type="SMR" id="P38479"/>
<dbReference type="GO" id="GO:0005884">
    <property type="term" value="C:actin filament"/>
    <property type="evidence" value="ECO:0007669"/>
    <property type="project" value="TreeGrafter"/>
</dbReference>
<dbReference type="GO" id="GO:0030864">
    <property type="term" value="C:cortical actin cytoskeleton"/>
    <property type="evidence" value="ECO:0007669"/>
    <property type="project" value="TreeGrafter"/>
</dbReference>
<dbReference type="GO" id="GO:0030427">
    <property type="term" value="C:site of polarized growth"/>
    <property type="evidence" value="ECO:0007669"/>
    <property type="project" value="TreeGrafter"/>
</dbReference>
<dbReference type="GO" id="GO:0051015">
    <property type="term" value="F:actin filament binding"/>
    <property type="evidence" value="ECO:0007669"/>
    <property type="project" value="TreeGrafter"/>
</dbReference>
<dbReference type="GO" id="GO:0030833">
    <property type="term" value="P:regulation of actin filament polymerization"/>
    <property type="evidence" value="ECO:0007669"/>
    <property type="project" value="TreeGrafter"/>
</dbReference>
<dbReference type="CDD" id="cd11961">
    <property type="entry name" value="SH3_Abp1_fungi_C2"/>
    <property type="match status" value="1"/>
</dbReference>
<dbReference type="FunFam" id="2.30.30.40:FF:000277">
    <property type="entry name" value="Actin-binding protein"/>
    <property type="match status" value="1"/>
</dbReference>
<dbReference type="FunFam" id="3.40.20.10:FF:000052">
    <property type="entry name" value="Actin-binding protein"/>
    <property type="match status" value="1"/>
</dbReference>
<dbReference type="Gene3D" id="3.40.20.10">
    <property type="entry name" value="Severin"/>
    <property type="match status" value="1"/>
</dbReference>
<dbReference type="Gene3D" id="2.30.30.40">
    <property type="entry name" value="SH3 Domains"/>
    <property type="match status" value="1"/>
</dbReference>
<dbReference type="InterPro" id="IPR035718">
    <property type="entry name" value="Abp1_fungi_SH3_C2"/>
</dbReference>
<dbReference type="InterPro" id="IPR002108">
    <property type="entry name" value="ADF-H"/>
</dbReference>
<dbReference type="InterPro" id="IPR029006">
    <property type="entry name" value="ADF-H/Gelsolin-like_dom_sf"/>
</dbReference>
<dbReference type="InterPro" id="IPR036028">
    <property type="entry name" value="SH3-like_dom_sf"/>
</dbReference>
<dbReference type="InterPro" id="IPR001452">
    <property type="entry name" value="SH3_domain"/>
</dbReference>
<dbReference type="PANTHER" id="PTHR10829">
    <property type="entry name" value="CORTACTIN AND DREBRIN"/>
    <property type="match status" value="1"/>
</dbReference>
<dbReference type="PANTHER" id="PTHR10829:SF25">
    <property type="entry name" value="DREBRIN-LIKE PROTEIN"/>
    <property type="match status" value="1"/>
</dbReference>
<dbReference type="Pfam" id="PF00241">
    <property type="entry name" value="Cofilin_ADF"/>
    <property type="match status" value="1"/>
</dbReference>
<dbReference type="Pfam" id="PF00018">
    <property type="entry name" value="SH3_1"/>
    <property type="match status" value="1"/>
</dbReference>
<dbReference type="PRINTS" id="PR00499">
    <property type="entry name" value="P67PHOX"/>
</dbReference>
<dbReference type="PRINTS" id="PR00452">
    <property type="entry name" value="SH3DOMAIN"/>
</dbReference>
<dbReference type="SMART" id="SM00102">
    <property type="entry name" value="ADF"/>
    <property type="match status" value="1"/>
</dbReference>
<dbReference type="SMART" id="SM00326">
    <property type="entry name" value="SH3"/>
    <property type="match status" value="1"/>
</dbReference>
<dbReference type="SUPFAM" id="SSF55753">
    <property type="entry name" value="Actin depolymerizing proteins"/>
    <property type="match status" value="1"/>
</dbReference>
<dbReference type="SUPFAM" id="SSF50044">
    <property type="entry name" value="SH3-domain"/>
    <property type="match status" value="1"/>
</dbReference>
<dbReference type="PROSITE" id="PS51263">
    <property type="entry name" value="ADF_H"/>
    <property type="match status" value="1"/>
</dbReference>
<dbReference type="PROSITE" id="PS50002">
    <property type="entry name" value="SH3"/>
    <property type="match status" value="1"/>
</dbReference>
<proteinExistence type="inferred from homology"/>
<comment type="function">
    <text evidence="1">May be involved in the spatial organization of cell surface growth. An overproduction of ABP1 causes the assembly of the cortical actin skeleton at inappropriate sites on the cell surface, resulting in delocalized surface growth (By similarity).</text>
</comment>
<comment type="subcellular location">
    <subcellularLocation>
        <location>Cytoplasm</location>
        <location>Cytoskeleton</location>
    </subcellularLocation>
    <text>Cortical cytoskeleton.</text>
</comment>